<organism>
    <name type="scientific">Pseudomonas entomophila (strain L48)</name>
    <dbReference type="NCBI Taxonomy" id="384676"/>
    <lineage>
        <taxon>Bacteria</taxon>
        <taxon>Pseudomonadati</taxon>
        <taxon>Pseudomonadota</taxon>
        <taxon>Gammaproteobacteria</taxon>
        <taxon>Pseudomonadales</taxon>
        <taxon>Pseudomonadaceae</taxon>
        <taxon>Pseudomonas</taxon>
    </lineage>
</organism>
<dbReference type="EC" id="3.4.21.92" evidence="1"/>
<dbReference type="EMBL" id="CT573326">
    <property type="protein sequence ID" value="CAK14705.1"/>
    <property type="molecule type" value="Genomic_DNA"/>
</dbReference>
<dbReference type="RefSeq" id="WP_011533114.1">
    <property type="nucleotide sequence ID" value="NC_008027.1"/>
</dbReference>
<dbReference type="SMR" id="Q1ICA8"/>
<dbReference type="STRING" id="384676.PSEEN1868"/>
<dbReference type="MEROPS" id="S14.001"/>
<dbReference type="GeneID" id="32805095"/>
<dbReference type="KEGG" id="pen:PSEEN1868"/>
<dbReference type="eggNOG" id="COG0740">
    <property type="taxonomic scope" value="Bacteria"/>
</dbReference>
<dbReference type="HOGENOM" id="CLU_058707_3_2_6"/>
<dbReference type="OrthoDB" id="9802800at2"/>
<dbReference type="Proteomes" id="UP000000658">
    <property type="component" value="Chromosome"/>
</dbReference>
<dbReference type="GO" id="GO:0005737">
    <property type="term" value="C:cytoplasm"/>
    <property type="evidence" value="ECO:0007669"/>
    <property type="project" value="UniProtKB-SubCell"/>
</dbReference>
<dbReference type="GO" id="GO:0009368">
    <property type="term" value="C:endopeptidase Clp complex"/>
    <property type="evidence" value="ECO:0007669"/>
    <property type="project" value="TreeGrafter"/>
</dbReference>
<dbReference type="GO" id="GO:0004176">
    <property type="term" value="F:ATP-dependent peptidase activity"/>
    <property type="evidence" value="ECO:0007669"/>
    <property type="project" value="InterPro"/>
</dbReference>
<dbReference type="GO" id="GO:0051117">
    <property type="term" value="F:ATPase binding"/>
    <property type="evidence" value="ECO:0007669"/>
    <property type="project" value="TreeGrafter"/>
</dbReference>
<dbReference type="GO" id="GO:0004252">
    <property type="term" value="F:serine-type endopeptidase activity"/>
    <property type="evidence" value="ECO:0007669"/>
    <property type="project" value="UniProtKB-UniRule"/>
</dbReference>
<dbReference type="GO" id="GO:0006515">
    <property type="term" value="P:protein quality control for misfolded or incompletely synthesized proteins"/>
    <property type="evidence" value="ECO:0007669"/>
    <property type="project" value="TreeGrafter"/>
</dbReference>
<dbReference type="CDD" id="cd07017">
    <property type="entry name" value="S14_ClpP_2"/>
    <property type="match status" value="1"/>
</dbReference>
<dbReference type="FunFam" id="3.90.226.10:FF:000001">
    <property type="entry name" value="ATP-dependent Clp protease proteolytic subunit"/>
    <property type="match status" value="1"/>
</dbReference>
<dbReference type="Gene3D" id="3.90.226.10">
    <property type="entry name" value="2-enoyl-CoA Hydratase, Chain A, domain 1"/>
    <property type="match status" value="1"/>
</dbReference>
<dbReference type="HAMAP" id="MF_00444">
    <property type="entry name" value="ClpP"/>
    <property type="match status" value="1"/>
</dbReference>
<dbReference type="InterPro" id="IPR001907">
    <property type="entry name" value="ClpP"/>
</dbReference>
<dbReference type="InterPro" id="IPR029045">
    <property type="entry name" value="ClpP/crotonase-like_dom_sf"/>
</dbReference>
<dbReference type="InterPro" id="IPR023562">
    <property type="entry name" value="ClpP/TepA"/>
</dbReference>
<dbReference type="InterPro" id="IPR033135">
    <property type="entry name" value="ClpP_His_AS"/>
</dbReference>
<dbReference type="InterPro" id="IPR018215">
    <property type="entry name" value="ClpP_Ser_AS"/>
</dbReference>
<dbReference type="NCBIfam" id="TIGR00493">
    <property type="entry name" value="clpP"/>
    <property type="match status" value="1"/>
</dbReference>
<dbReference type="NCBIfam" id="NF001368">
    <property type="entry name" value="PRK00277.1"/>
    <property type="match status" value="1"/>
</dbReference>
<dbReference type="NCBIfam" id="NF009205">
    <property type="entry name" value="PRK12553.1"/>
    <property type="match status" value="1"/>
</dbReference>
<dbReference type="PANTHER" id="PTHR10381">
    <property type="entry name" value="ATP-DEPENDENT CLP PROTEASE PROTEOLYTIC SUBUNIT"/>
    <property type="match status" value="1"/>
</dbReference>
<dbReference type="PANTHER" id="PTHR10381:SF70">
    <property type="entry name" value="ATP-DEPENDENT CLP PROTEASE PROTEOLYTIC SUBUNIT"/>
    <property type="match status" value="1"/>
</dbReference>
<dbReference type="Pfam" id="PF00574">
    <property type="entry name" value="CLP_protease"/>
    <property type="match status" value="1"/>
</dbReference>
<dbReference type="PRINTS" id="PR00127">
    <property type="entry name" value="CLPPROTEASEP"/>
</dbReference>
<dbReference type="SUPFAM" id="SSF52096">
    <property type="entry name" value="ClpP/crotonase"/>
    <property type="match status" value="1"/>
</dbReference>
<dbReference type="PROSITE" id="PS00382">
    <property type="entry name" value="CLP_PROTEASE_HIS"/>
    <property type="match status" value="1"/>
</dbReference>
<dbReference type="PROSITE" id="PS00381">
    <property type="entry name" value="CLP_PROTEASE_SER"/>
    <property type="match status" value="1"/>
</dbReference>
<proteinExistence type="inferred from homology"/>
<sequence length="213" mass="23388">MSRNSYIQQSSDIQAAGGLVPMVIEQSARGERAYDIYSRLLKERVIFLVGPVEDYMANLVVAQLLFLEAENPDKDIHLYINSPGGSVTAGMSIYDTMQFIKPDVSTICIGQACSMGAFLLAAGAAGKRHCLPNSRVMIHQPLGGFQGQATDIEIHAQEILNIKARLNELLAHHTGQSLETIKRDTERDNFMSAARAAEYGLIDSVYDKRQLAS</sequence>
<protein>
    <recommendedName>
        <fullName evidence="1">ATP-dependent Clp protease proteolytic subunit</fullName>
        <ecNumber evidence="1">3.4.21.92</ecNumber>
    </recommendedName>
    <alternativeName>
        <fullName evidence="1">Endopeptidase Clp</fullName>
    </alternativeName>
</protein>
<feature type="chain" id="PRO_1000026113" description="ATP-dependent Clp protease proteolytic subunit">
    <location>
        <begin position="1"/>
        <end position="213"/>
    </location>
</feature>
<feature type="active site" description="Nucleophile" evidence="1">
    <location>
        <position position="114"/>
    </location>
</feature>
<feature type="active site" evidence="1">
    <location>
        <position position="139"/>
    </location>
</feature>
<reference key="1">
    <citation type="journal article" date="2006" name="Nat. Biotechnol.">
        <title>Complete genome sequence of the entomopathogenic and metabolically versatile soil bacterium Pseudomonas entomophila.</title>
        <authorList>
            <person name="Vodovar N."/>
            <person name="Vallenet D."/>
            <person name="Cruveiller S."/>
            <person name="Rouy Z."/>
            <person name="Barbe V."/>
            <person name="Acosta C."/>
            <person name="Cattolico L."/>
            <person name="Jubin C."/>
            <person name="Lajus A."/>
            <person name="Segurens B."/>
            <person name="Vacherie B."/>
            <person name="Wincker P."/>
            <person name="Weissenbach J."/>
            <person name="Lemaitre B."/>
            <person name="Medigue C."/>
            <person name="Boccard F."/>
        </authorList>
    </citation>
    <scope>NUCLEOTIDE SEQUENCE [LARGE SCALE GENOMIC DNA]</scope>
    <source>
        <strain>L48</strain>
    </source>
</reference>
<gene>
    <name evidence="1" type="primary">clpP</name>
    <name type="ordered locus">PSEEN1868</name>
</gene>
<accession>Q1ICA8</accession>
<name>CLPP_PSEE4</name>
<comment type="function">
    <text evidence="1">Cleaves peptides in various proteins in a process that requires ATP hydrolysis. Has a chymotrypsin-like activity. Plays a major role in the degradation of misfolded proteins.</text>
</comment>
<comment type="catalytic activity">
    <reaction evidence="1">
        <text>Hydrolysis of proteins to small peptides in the presence of ATP and magnesium. alpha-casein is the usual test substrate. In the absence of ATP, only oligopeptides shorter than five residues are hydrolyzed (such as succinyl-Leu-Tyr-|-NHMec, and Leu-Tyr-Leu-|-Tyr-Trp, in which cleavage of the -Tyr-|-Leu- and -Tyr-|-Trp bonds also occurs).</text>
        <dbReference type="EC" id="3.4.21.92"/>
    </reaction>
</comment>
<comment type="subunit">
    <text evidence="1">Fourteen ClpP subunits assemble into 2 heptameric rings which stack back to back to give a disk-like structure with a central cavity, resembling the structure of eukaryotic proteasomes.</text>
</comment>
<comment type="subcellular location">
    <subcellularLocation>
        <location evidence="1">Cytoplasm</location>
    </subcellularLocation>
</comment>
<comment type="similarity">
    <text evidence="1">Belongs to the peptidase S14 family.</text>
</comment>
<keyword id="KW-0963">Cytoplasm</keyword>
<keyword id="KW-0378">Hydrolase</keyword>
<keyword id="KW-0645">Protease</keyword>
<keyword id="KW-0720">Serine protease</keyword>
<evidence type="ECO:0000255" key="1">
    <source>
        <dbReference type="HAMAP-Rule" id="MF_00444"/>
    </source>
</evidence>